<comment type="function">
    <text evidence="2">Palmitoyltransferase that catalyzes the addition of palmitate onto various protein substrates, such as ADRB2, GSDMD, HRAS, NRAS and CGAS.</text>
</comment>
<comment type="catalytic activity">
    <reaction evidence="2">
        <text>L-cysteinyl-[protein] + hexadecanoyl-CoA = S-hexadecanoyl-L-cysteinyl-[protein] + CoA</text>
        <dbReference type="Rhea" id="RHEA:36683"/>
        <dbReference type="Rhea" id="RHEA-COMP:10131"/>
        <dbReference type="Rhea" id="RHEA-COMP:11032"/>
        <dbReference type="ChEBI" id="CHEBI:29950"/>
        <dbReference type="ChEBI" id="CHEBI:57287"/>
        <dbReference type="ChEBI" id="CHEBI:57379"/>
        <dbReference type="ChEBI" id="CHEBI:74151"/>
        <dbReference type="EC" id="2.3.1.225"/>
    </reaction>
    <physiologicalReaction direction="left-to-right" evidence="2">
        <dbReference type="Rhea" id="RHEA:36684"/>
    </physiologicalReaction>
</comment>
<comment type="subcellular location">
    <subcellularLocation>
        <location evidence="2">Endoplasmic reticulum membrane</location>
        <topology evidence="3">Multi-pass membrane protein</topology>
    </subcellularLocation>
    <subcellularLocation>
        <location evidence="2">Golgi apparatus membrane</location>
        <topology evidence="3">Multi-pass membrane protein</topology>
    </subcellularLocation>
</comment>
<comment type="developmental stage">
    <text evidence="6 7">Probably maternally supplied, the zygotic expression becomes significant at the 512-cell stage and increases until 10 hpf and then decreases but is still detected at 24 hpf.</text>
</comment>
<comment type="domain">
    <text evidence="1">The DHHC domain is required for palmitoyltransferase activity.</text>
</comment>
<comment type="similarity">
    <text evidence="10">Belongs to the DHHC palmitoyltransferase family. ERF2/ZDHHC9 subfamily.</text>
</comment>
<comment type="sequence caution" evidence="10">
    <conflict type="erroneous initiation">
        <sequence resource="EMBL-CDS" id="AAI15337"/>
    </conflict>
    <text>Truncated N-terminus.</text>
</comment>
<accession>F1R013</accession>
<accession>A7YT88</accession>
<gene>
    <name evidence="9 12" type="primary">zdhhc9</name>
    <name evidence="8" type="synonym">dhcc9</name>
    <name evidence="11" type="ORF">zgc:136936</name>
</gene>
<evidence type="ECO:0000250" key="1">
    <source>
        <dbReference type="UniProtKB" id="Q8IUH5"/>
    </source>
</evidence>
<evidence type="ECO:0000250" key="2">
    <source>
        <dbReference type="UniProtKB" id="Q9Y397"/>
    </source>
</evidence>
<evidence type="ECO:0000255" key="3"/>
<evidence type="ECO:0000255" key="4">
    <source>
        <dbReference type="PROSITE-ProRule" id="PRU00067"/>
    </source>
</evidence>
<evidence type="ECO:0000256" key="5">
    <source>
        <dbReference type="SAM" id="MobiDB-lite"/>
    </source>
</evidence>
<evidence type="ECO:0000269" key="6">
    <source>
    </source>
</evidence>
<evidence type="ECO:0000269" key="7">
    <source>
    </source>
</evidence>
<evidence type="ECO:0000303" key="8">
    <source>
    </source>
</evidence>
<evidence type="ECO:0000303" key="9">
    <source>
    </source>
</evidence>
<evidence type="ECO:0000305" key="10"/>
<evidence type="ECO:0000312" key="11">
    <source>
        <dbReference type="EMBL" id="AAI15337.1"/>
    </source>
</evidence>
<evidence type="ECO:0000312" key="12">
    <source>
        <dbReference type="ZFIN" id="ZDB-GENE-071004-8"/>
    </source>
</evidence>
<protein>
    <recommendedName>
        <fullName evidence="10">Palmitoyltransferase ZDHHC9</fullName>
        <ecNumber evidence="2">2.3.1.225</ecNumber>
    </recommendedName>
    <alternativeName>
        <fullName evidence="8">DHHC domain-containing protein 9</fullName>
    </alternativeName>
    <alternativeName>
        <fullName evidence="9">Zinc finger DHHC domain-containing protein 9</fullName>
        <shortName>DHHC-9</shortName>
    </alternativeName>
</protein>
<name>ZDHC9_DANRE</name>
<dbReference type="EC" id="2.3.1.225" evidence="2"/>
<dbReference type="EMBL" id="BX004980">
    <property type="status" value="NOT_ANNOTATED_CDS"/>
    <property type="molecule type" value="Genomic_DNA"/>
</dbReference>
<dbReference type="EMBL" id="BC115336">
    <property type="protein sequence ID" value="AAI15337.1"/>
    <property type="status" value="ALT_INIT"/>
    <property type="molecule type" value="mRNA"/>
</dbReference>
<dbReference type="RefSeq" id="NP_001103496.1">
    <property type="nucleotide sequence ID" value="NM_001110026.1"/>
</dbReference>
<dbReference type="SMR" id="F1R013"/>
<dbReference type="FunCoup" id="F1R013">
    <property type="interactions" value="545"/>
</dbReference>
<dbReference type="STRING" id="7955.ENSDARP00000079770"/>
<dbReference type="PaxDb" id="7955-ENSDARP00000079770"/>
<dbReference type="Ensembl" id="ENSDART00000085335">
    <property type="protein sequence ID" value="ENSDARP00000079770"/>
    <property type="gene ID" value="ENSDARG00000060515"/>
</dbReference>
<dbReference type="GeneID" id="560095"/>
<dbReference type="KEGG" id="dre:560095"/>
<dbReference type="AGR" id="ZFIN:ZDB-GENE-071004-8"/>
<dbReference type="CTD" id="51114"/>
<dbReference type="ZFIN" id="ZDB-GENE-071004-8">
    <property type="gene designation" value="zdhhc9"/>
</dbReference>
<dbReference type="eggNOG" id="KOG1311">
    <property type="taxonomic scope" value="Eukaryota"/>
</dbReference>
<dbReference type="HOGENOM" id="CLU_018741_3_1_1"/>
<dbReference type="InParanoid" id="F1R013"/>
<dbReference type="OMA" id="YVTMFLI"/>
<dbReference type="OrthoDB" id="4096362at2759"/>
<dbReference type="TreeFam" id="TF312923"/>
<dbReference type="PRO" id="PR:F1R013"/>
<dbReference type="Proteomes" id="UP000000437">
    <property type="component" value="Chromosome 14"/>
</dbReference>
<dbReference type="Bgee" id="ENSDARG00000060515">
    <property type="expression patterns" value="Expressed in intestine and 25 other cell types or tissues"/>
</dbReference>
<dbReference type="GO" id="GO:0005783">
    <property type="term" value="C:endoplasmic reticulum"/>
    <property type="evidence" value="ECO:0000318"/>
    <property type="project" value="GO_Central"/>
</dbReference>
<dbReference type="GO" id="GO:0005789">
    <property type="term" value="C:endoplasmic reticulum membrane"/>
    <property type="evidence" value="ECO:0007669"/>
    <property type="project" value="UniProtKB-SubCell"/>
</dbReference>
<dbReference type="GO" id="GO:0005794">
    <property type="term" value="C:Golgi apparatus"/>
    <property type="evidence" value="ECO:0000250"/>
    <property type="project" value="UniProtKB"/>
</dbReference>
<dbReference type="GO" id="GO:0000139">
    <property type="term" value="C:Golgi membrane"/>
    <property type="evidence" value="ECO:0007669"/>
    <property type="project" value="UniProtKB-SubCell"/>
</dbReference>
<dbReference type="GO" id="GO:0019706">
    <property type="term" value="F:protein-cysteine S-palmitoyltransferase activity"/>
    <property type="evidence" value="ECO:0000250"/>
    <property type="project" value="UniProtKB"/>
</dbReference>
<dbReference type="GO" id="GO:0018230">
    <property type="term" value="P:peptidyl-L-cysteine S-palmitoylation"/>
    <property type="evidence" value="ECO:0000250"/>
    <property type="project" value="UniProtKB"/>
</dbReference>
<dbReference type="GO" id="GO:0140639">
    <property type="term" value="P:positive regulation of pyroptotic inflammatory response"/>
    <property type="evidence" value="ECO:0000250"/>
    <property type="project" value="UniProtKB"/>
</dbReference>
<dbReference type="GO" id="GO:0006612">
    <property type="term" value="P:protein targeting to membrane"/>
    <property type="evidence" value="ECO:0000318"/>
    <property type="project" value="GO_Central"/>
</dbReference>
<dbReference type="InterPro" id="IPR001594">
    <property type="entry name" value="Palmitoyltrfase_DHHC"/>
</dbReference>
<dbReference type="InterPro" id="IPR039859">
    <property type="entry name" value="PFA4/ZDH16/20/ERF2-like"/>
</dbReference>
<dbReference type="PANTHER" id="PTHR22883:SF71">
    <property type="entry name" value="PALMITOYLTRANSFERASE ZDHHC9"/>
    <property type="match status" value="1"/>
</dbReference>
<dbReference type="PANTHER" id="PTHR22883">
    <property type="entry name" value="ZINC FINGER DHHC DOMAIN CONTAINING PROTEIN"/>
    <property type="match status" value="1"/>
</dbReference>
<dbReference type="Pfam" id="PF01529">
    <property type="entry name" value="DHHC"/>
    <property type="match status" value="1"/>
</dbReference>
<dbReference type="PROSITE" id="PS50216">
    <property type="entry name" value="DHHC"/>
    <property type="match status" value="1"/>
</dbReference>
<keyword id="KW-0012">Acyltransferase</keyword>
<keyword id="KW-0256">Endoplasmic reticulum</keyword>
<keyword id="KW-0333">Golgi apparatus</keyword>
<keyword id="KW-0449">Lipoprotein</keyword>
<keyword id="KW-0472">Membrane</keyword>
<keyword id="KW-0564">Palmitate</keyword>
<keyword id="KW-1185">Reference proteome</keyword>
<keyword id="KW-0808">Transferase</keyword>
<keyword id="KW-0812">Transmembrane</keyword>
<keyword id="KW-1133">Transmembrane helix</keyword>
<reference key="1">
    <citation type="journal article" date="2013" name="Nature">
        <title>The zebrafish reference genome sequence and its relationship to the human genome.</title>
        <authorList>
            <person name="Howe K."/>
            <person name="Clark M.D."/>
            <person name="Torroja C.F."/>
            <person name="Torrance J."/>
            <person name="Berthelot C."/>
            <person name="Muffato M."/>
            <person name="Collins J.E."/>
            <person name="Humphray S."/>
            <person name="McLaren K."/>
            <person name="Matthews L."/>
            <person name="McLaren S."/>
            <person name="Sealy I."/>
            <person name="Caccamo M."/>
            <person name="Churcher C."/>
            <person name="Scott C."/>
            <person name="Barrett J.C."/>
            <person name="Koch R."/>
            <person name="Rauch G.J."/>
            <person name="White S."/>
            <person name="Chow W."/>
            <person name="Kilian B."/>
            <person name="Quintais L.T."/>
            <person name="Guerra-Assuncao J.A."/>
            <person name="Zhou Y."/>
            <person name="Gu Y."/>
            <person name="Yen J."/>
            <person name="Vogel J.H."/>
            <person name="Eyre T."/>
            <person name="Redmond S."/>
            <person name="Banerjee R."/>
            <person name="Chi J."/>
            <person name="Fu B."/>
            <person name="Langley E."/>
            <person name="Maguire S.F."/>
            <person name="Laird G.K."/>
            <person name="Lloyd D."/>
            <person name="Kenyon E."/>
            <person name="Donaldson S."/>
            <person name="Sehra H."/>
            <person name="Almeida-King J."/>
            <person name="Loveland J."/>
            <person name="Trevanion S."/>
            <person name="Jones M."/>
            <person name="Quail M."/>
            <person name="Willey D."/>
            <person name="Hunt A."/>
            <person name="Burton J."/>
            <person name="Sims S."/>
            <person name="McLay K."/>
            <person name="Plumb B."/>
            <person name="Davis J."/>
            <person name="Clee C."/>
            <person name="Oliver K."/>
            <person name="Clark R."/>
            <person name="Riddle C."/>
            <person name="Elliot D."/>
            <person name="Threadgold G."/>
            <person name="Harden G."/>
            <person name="Ware D."/>
            <person name="Begum S."/>
            <person name="Mortimore B."/>
            <person name="Kerry G."/>
            <person name="Heath P."/>
            <person name="Phillimore B."/>
            <person name="Tracey A."/>
            <person name="Corby N."/>
            <person name="Dunn M."/>
            <person name="Johnson C."/>
            <person name="Wood J."/>
            <person name="Clark S."/>
            <person name="Pelan S."/>
            <person name="Griffiths G."/>
            <person name="Smith M."/>
            <person name="Glithero R."/>
            <person name="Howden P."/>
            <person name="Barker N."/>
            <person name="Lloyd C."/>
            <person name="Stevens C."/>
            <person name="Harley J."/>
            <person name="Holt K."/>
            <person name="Panagiotidis G."/>
            <person name="Lovell J."/>
            <person name="Beasley H."/>
            <person name="Henderson C."/>
            <person name="Gordon D."/>
            <person name="Auger K."/>
            <person name="Wright D."/>
            <person name="Collins J."/>
            <person name="Raisen C."/>
            <person name="Dyer L."/>
            <person name="Leung K."/>
            <person name="Robertson L."/>
            <person name="Ambridge K."/>
            <person name="Leongamornlert D."/>
            <person name="McGuire S."/>
            <person name="Gilderthorp R."/>
            <person name="Griffiths C."/>
            <person name="Manthravadi D."/>
            <person name="Nichol S."/>
            <person name="Barker G."/>
            <person name="Whitehead S."/>
            <person name="Kay M."/>
            <person name="Brown J."/>
            <person name="Murnane C."/>
            <person name="Gray E."/>
            <person name="Humphries M."/>
            <person name="Sycamore N."/>
            <person name="Barker D."/>
            <person name="Saunders D."/>
            <person name="Wallis J."/>
            <person name="Babbage A."/>
            <person name="Hammond S."/>
            <person name="Mashreghi-Mohammadi M."/>
            <person name="Barr L."/>
            <person name="Martin S."/>
            <person name="Wray P."/>
            <person name="Ellington A."/>
            <person name="Matthews N."/>
            <person name="Ellwood M."/>
            <person name="Woodmansey R."/>
            <person name="Clark G."/>
            <person name="Cooper J."/>
            <person name="Tromans A."/>
            <person name="Grafham D."/>
            <person name="Skuce C."/>
            <person name="Pandian R."/>
            <person name="Andrews R."/>
            <person name="Harrison E."/>
            <person name="Kimberley A."/>
            <person name="Garnett J."/>
            <person name="Fosker N."/>
            <person name="Hall R."/>
            <person name="Garner P."/>
            <person name="Kelly D."/>
            <person name="Bird C."/>
            <person name="Palmer S."/>
            <person name="Gehring I."/>
            <person name="Berger A."/>
            <person name="Dooley C.M."/>
            <person name="Ersan-Urun Z."/>
            <person name="Eser C."/>
            <person name="Geiger H."/>
            <person name="Geisler M."/>
            <person name="Karotki L."/>
            <person name="Kirn A."/>
            <person name="Konantz J."/>
            <person name="Konantz M."/>
            <person name="Oberlander M."/>
            <person name="Rudolph-Geiger S."/>
            <person name="Teucke M."/>
            <person name="Lanz C."/>
            <person name="Raddatz G."/>
            <person name="Osoegawa K."/>
            <person name="Zhu B."/>
            <person name="Rapp A."/>
            <person name="Widaa S."/>
            <person name="Langford C."/>
            <person name="Yang F."/>
            <person name="Schuster S.C."/>
            <person name="Carter N.P."/>
            <person name="Harrow J."/>
            <person name="Ning Z."/>
            <person name="Herrero J."/>
            <person name="Searle S.M."/>
            <person name="Enright A."/>
            <person name="Geisler R."/>
            <person name="Plasterk R.H."/>
            <person name="Lee C."/>
            <person name="Westerfield M."/>
            <person name="de Jong P.J."/>
            <person name="Zon L.I."/>
            <person name="Postlethwait J.H."/>
            <person name="Nusslein-Volhard C."/>
            <person name="Hubbard T.J."/>
            <person name="Roest Crollius H."/>
            <person name="Rogers J."/>
            <person name="Stemple D.L."/>
        </authorList>
    </citation>
    <scope>NUCLEOTIDE SEQUENCE [LARGE SCALE GENOMIC DNA]</scope>
    <source>
        <strain>Tuebingen</strain>
    </source>
</reference>
<reference key="2">
    <citation type="submission" date="2006-04" db="EMBL/GenBank/DDBJ databases">
        <authorList>
            <consortium name="NIH - Zebrafish Gene Collection (ZGC) project"/>
        </authorList>
    </citation>
    <scope>NUCLEOTIDE SEQUENCE [LARGE SCALE MRNA] OF 2-386</scope>
    <source>
        <tissue>Embryo</tissue>
    </source>
</reference>
<reference key="3">
    <citation type="journal article" date="2015" name="Neurotoxicol. Teratol.">
        <title>2-Bromopalmitate impairs neural stem/progenitor cell proliferation, promotes cell apoptosis and induces malformation in zebrafish embryonic brain.</title>
        <authorList>
            <person name="Wang C."/>
            <person name="Chen X."/>
            <person name="Shi W."/>
            <person name="Wang F."/>
            <person name="Du Z."/>
            <person name="Li X."/>
            <person name="Yao Y."/>
            <person name="Liu T."/>
            <person name="Shao T."/>
            <person name="Li G."/>
            <person name="Hao A."/>
        </authorList>
    </citation>
    <scope>DEVELOPMENTAL STAGE</scope>
</reference>
<reference key="4">
    <citation type="journal article" date="2016" name="Biochem. Biophys. Res. Commun.">
        <title>Protein palmitoylation activate zygotic gene expression during the maternal-to-zygotic transition.</title>
        <authorList>
            <person name="Du Z."/>
            <person name="Chen X."/>
            <person name="Li X."/>
            <person name="He K."/>
            <person name="Ji S."/>
            <person name="Shi W."/>
            <person name="Hao A."/>
        </authorList>
    </citation>
    <scope>DEVELOPMENTAL STAGE</scope>
</reference>
<feature type="chain" id="PRO_0000451040" description="Palmitoyltransferase ZDHHC9">
    <location>
        <begin position="1"/>
        <end position="386"/>
    </location>
</feature>
<feature type="topological domain" description="Cytoplasmic" evidence="10">
    <location>
        <begin position="1"/>
        <end position="35"/>
    </location>
</feature>
<feature type="transmembrane region" description="Helical" evidence="3">
    <location>
        <begin position="36"/>
        <end position="56"/>
    </location>
</feature>
<feature type="topological domain" description="Lumenal" evidence="10">
    <location>
        <begin position="57"/>
        <end position="63"/>
    </location>
</feature>
<feature type="transmembrane region" description="Helical" evidence="3">
    <location>
        <begin position="64"/>
        <end position="84"/>
    </location>
</feature>
<feature type="topological domain" description="Cytoplasmic" evidence="10">
    <location>
        <begin position="85"/>
        <end position="183"/>
    </location>
</feature>
<feature type="transmembrane region" description="Helical" evidence="3">
    <location>
        <begin position="184"/>
        <end position="204"/>
    </location>
</feature>
<feature type="topological domain" description="Lumenal" evidence="10">
    <location>
        <begin position="205"/>
        <end position="224"/>
    </location>
</feature>
<feature type="transmembrane region" description="Helical" evidence="3">
    <location>
        <begin position="225"/>
        <end position="245"/>
    </location>
</feature>
<feature type="topological domain" description="Cytoplasmic" evidence="10">
    <location>
        <begin position="246"/>
        <end position="386"/>
    </location>
</feature>
<feature type="domain" description="DHHC" evidence="4">
    <location>
        <begin position="139"/>
        <end position="189"/>
    </location>
</feature>
<feature type="region of interest" description="Disordered" evidence="5">
    <location>
        <begin position="306"/>
        <end position="386"/>
    </location>
</feature>
<feature type="compositionally biased region" description="Polar residues" evidence="5">
    <location>
        <begin position="306"/>
        <end position="334"/>
    </location>
</feature>
<feature type="active site" description="S-palmitoyl cysteine intermediate" evidence="4">
    <location>
        <position position="169"/>
    </location>
</feature>
<feature type="sequence conflict" description="In Ref. 2; AAI15337." evidence="10" ref="2">
    <original>V</original>
    <variation>L</variation>
    <location>
        <position position="320"/>
    </location>
</feature>
<feature type="sequence conflict" description="In Ref. 2; AAI15337." evidence="10" ref="2">
    <original>C</original>
    <variation>G</variation>
    <location>
        <position position="352"/>
    </location>
</feature>
<proteinExistence type="evidence at transcript level"/>
<sequence>MSAVMITRKITRKWEKLPGKNTFCCDGRVMMARQKGVFYLTLFLIVGTCSLFFAFECPYLAVHLSPAIPVFAVLLFVFVMAMLLRTSFSDPGVLPRALPEEANFIEMEIEAANGNVLAGQRPPPRIKNVQINNQIVKLKYCYTCKIFRPPRASHCSICDNCVDRFDHHCPWVGNCVGKRNYRYFYLFTLSLSLLTIYIFAFDIVHVVLRSVDSGFVNTLKETPGTVLEVLVCFFTLWSVVGLTGFHTYLISLNQTTNEDIKGSWSGKNRVQNPYSHKNIIKNCCEVLCGPTYPSVLDRRGLMLEDSCSSAPSNGATTVPVNKSSNPATQTTKSSAPLIPNEHTPDEAKPSICSGTQKSSSSPKEEKPSSPISPNAVAPAVIKESTH</sequence>
<organism>
    <name type="scientific">Danio rerio</name>
    <name type="common">Zebrafish</name>
    <name type="synonym">Brachydanio rerio</name>
    <dbReference type="NCBI Taxonomy" id="7955"/>
    <lineage>
        <taxon>Eukaryota</taxon>
        <taxon>Metazoa</taxon>
        <taxon>Chordata</taxon>
        <taxon>Craniata</taxon>
        <taxon>Vertebrata</taxon>
        <taxon>Euteleostomi</taxon>
        <taxon>Actinopterygii</taxon>
        <taxon>Neopterygii</taxon>
        <taxon>Teleostei</taxon>
        <taxon>Ostariophysi</taxon>
        <taxon>Cypriniformes</taxon>
        <taxon>Danionidae</taxon>
        <taxon>Danioninae</taxon>
        <taxon>Danio</taxon>
    </lineage>
</organism>